<comment type="function">
    <text evidence="1">Involved in the biosynthesis of branched-chain amino acids (BCAA). Catalyzes an alkyl-migration followed by a ketol-acid reduction of (S)-2-acetolactate (S2AL) to yield (R)-2,3-dihydroxy-isovalerate. In the isomerase reaction, S2AL is rearranged via a Mg-dependent methyl migration to produce 3-hydroxy-3-methyl-2-ketobutyrate (HMKB). In the reductase reaction, this 2-ketoacid undergoes a metal-dependent reduction by NADPH to yield (R)-2,3-dihydroxy-isovalerate.</text>
</comment>
<comment type="catalytic activity">
    <reaction evidence="1">
        <text>(2R)-2,3-dihydroxy-3-methylbutanoate + NADP(+) = (2S)-2-acetolactate + NADPH + H(+)</text>
        <dbReference type="Rhea" id="RHEA:22068"/>
        <dbReference type="ChEBI" id="CHEBI:15378"/>
        <dbReference type="ChEBI" id="CHEBI:49072"/>
        <dbReference type="ChEBI" id="CHEBI:57783"/>
        <dbReference type="ChEBI" id="CHEBI:58349"/>
        <dbReference type="ChEBI" id="CHEBI:58476"/>
        <dbReference type="EC" id="1.1.1.86"/>
    </reaction>
</comment>
<comment type="catalytic activity">
    <reaction evidence="1">
        <text>(2R,3R)-2,3-dihydroxy-3-methylpentanoate + NADP(+) = (S)-2-ethyl-2-hydroxy-3-oxobutanoate + NADPH + H(+)</text>
        <dbReference type="Rhea" id="RHEA:13493"/>
        <dbReference type="ChEBI" id="CHEBI:15378"/>
        <dbReference type="ChEBI" id="CHEBI:49256"/>
        <dbReference type="ChEBI" id="CHEBI:49258"/>
        <dbReference type="ChEBI" id="CHEBI:57783"/>
        <dbReference type="ChEBI" id="CHEBI:58349"/>
        <dbReference type="EC" id="1.1.1.86"/>
    </reaction>
</comment>
<comment type="cofactor">
    <cofactor evidence="1">
        <name>Mg(2+)</name>
        <dbReference type="ChEBI" id="CHEBI:18420"/>
    </cofactor>
    <text evidence="1">Binds 2 magnesium ions per subunit.</text>
</comment>
<comment type="pathway">
    <text evidence="1">Amino-acid biosynthesis; L-isoleucine biosynthesis; L-isoleucine from 2-oxobutanoate: step 2/4.</text>
</comment>
<comment type="pathway">
    <text evidence="1">Amino-acid biosynthesis; L-valine biosynthesis; L-valine from pyruvate: step 2/4.</text>
</comment>
<comment type="similarity">
    <text evidence="1">Belongs to the ketol-acid reductoisomerase family.</text>
</comment>
<gene>
    <name evidence="1" type="primary">ilvC</name>
    <name type="ordered locus">cce_2120</name>
</gene>
<sequence length="331" mass="36284">MARMYYDADANLDLLADKTVAIIGYGSQGHAHALNLKDSGINVVVGLYPGSKSRQKAEDAGLKVMNVADAASAADWIMILLPDEVQKAVYQEDIEPNLREGKVLSFAHGFNIHFGQIVPPETVDVIMVAPKGPGHLVRRTYEQGEGVPCLFAVYQDASGQARDRAMAYAKGIGGTRAGILETSFREETETDLFGEQVVLCGGLSALIKSGFETLVAAGYQPELAYFECLHEVKLIVDLIVEGGLAKMRDSISNTAEYGDLTRGPRIVTDETRAEMKQILREIQSGQFAREFVLENQSGKPGFTAMRRQEAEHPIEEVGKDLRAMFSWLKDK</sequence>
<protein>
    <recommendedName>
        <fullName evidence="1">Ketol-acid reductoisomerase (NADP(+))</fullName>
        <shortName evidence="1">KARI</shortName>
        <ecNumber evidence="1">1.1.1.86</ecNumber>
    </recommendedName>
    <alternativeName>
        <fullName evidence="1">Acetohydroxy-acid isomeroreductase</fullName>
        <shortName evidence="1">AHIR</shortName>
    </alternativeName>
    <alternativeName>
        <fullName evidence="1">Alpha-keto-beta-hydroxylacyl reductoisomerase</fullName>
    </alternativeName>
    <alternativeName>
        <fullName evidence="1">Ketol-acid reductoisomerase type 1</fullName>
    </alternativeName>
    <alternativeName>
        <fullName evidence="1">Ketol-acid reductoisomerase type I</fullName>
    </alternativeName>
</protein>
<organism>
    <name type="scientific">Crocosphaera subtropica (strain ATCC 51142 / BH68)</name>
    <name type="common">Cyanothece sp. (strain ATCC 51142)</name>
    <dbReference type="NCBI Taxonomy" id="43989"/>
    <lineage>
        <taxon>Bacteria</taxon>
        <taxon>Bacillati</taxon>
        <taxon>Cyanobacteriota</taxon>
        <taxon>Cyanophyceae</taxon>
        <taxon>Oscillatoriophycideae</taxon>
        <taxon>Chroococcales</taxon>
        <taxon>Aphanothecaceae</taxon>
        <taxon>Crocosphaera</taxon>
        <taxon>Crocosphaera subtropica</taxon>
    </lineage>
</organism>
<feature type="chain" id="PRO_1000190940" description="Ketol-acid reductoisomerase (NADP(+))">
    <location>
        <begin position="1"/>
        <end position="331"/>
    </location>
</feature>
<feature type="domain" description="KARI N-terminal Rossmann" evidence="2">
    <location>
        <begin position="2"/>
        <end position="182"/>
    </location>
</feature>
<feature type="domain" description="KARI C-terminal knotted" evidence="3">
    <location>
        <begin position="183"/>
        <end position="328"/>
    </location>
</feature>
<feature type="active site" evidence="1">
    <location>
        <position position="108"/>
    </location>
</feature>
<feature type="binding site" evidence="1">
    <location>
        <begin position="25"/>
        <end position="28"/>
    </location>
    <ligand>
        <name>NADP(+)</name>
        <dbReference type="ChEBI" id="CHEBI:58349"/>
    </ligand>
</feature>
<feature type="binding site" evidence="1">
    <location>
        <position position="51"/>
    </location>
    <ligand>
        <name>NADP(+)</name>
        <dbReference type="ChEBI" id="CHEBI:58349"/>
    </ligand>
</feature>
<feature type="binding site" evidence="1">
    <location>
        <position position="53"/>
    </location>
    <ligand>
        <name>NADP(+)</name>
        <dbReference type="ChEBI" id="CHEBI:58349"/>
    </ligand>
</feature>
<feature type="binding site" evidence="1">
    <location>
        <begin position="83"/>
        <end position="86"/>
    </location>
    <ligand>
        <name>NADP(+)</name>
        <dbReference type="ChEBI" id="CHEBI:58349"/>
    </ligand>
</feature>
<feature type="binding site" evidence="1">
    <location>
        <position position="134"/>
    </location>
    <ligand>
        <name>NADP(+)</name>
        <dbReference type="ChEBI" id="CHEBI:58349"/>
    </ligand>
</feature>
<feature type="binding site" evidence="1">
    <location>
        <position position="191"/>
    </location>
    <ligand>
        <name>Mg(2+)</name>
        <dbReference type="ChEBI" id="CHEBI:18420"/>
        <label>1</label>
    </ligand>
</feature>
<feature type="binding site" evidence="1">
    <location>
        <position position="191"/>
    </location>
    <ligand>
        <name>Mg(2+)</name>
        <dbReference type="ChEBI" id="CHEBI:18420"/>
        <label>2</label>
    </ligand>
</feature>
<feature type="binding site" evidence="1">
    <location>
        <position position="195"/>
    </location>
    <ligand>
        <name>Mg(2+)</name>
        <dbReference type="ChEBI" id="CHEBI:18420"/>
        <label>1</label>
    </ligand>
</feature>
<feature type="binding site" evidence="1">
    <location>
        <position position="227"/>
    </location>
    <ligand>
        <name>Mg(2+)</name>
        <dbReference type="ChEBI" id="CHEBI:18420"/>
        <label>2</label>
    </ligand>
</feature>
<feature type="binding site" evidence="1">
    <location>
        <position position="231"/>
    </location>
    <ligand>
        <name>Mg(2+)</name>
        <dbReference type="ChEBI" id="CHEBI:18420"/>
        <label>2</label>
    </ligand>
</feature>
<feature type="binding site" evidence="1">
    <location>
        <position position="252"/>
    </location>
    <ligand>
        <name>substrate</name>
    </ligand>
</feature>
<proteinExistence type="inferred from homology"/>
<keyword id="KW-0028">Amino-acid biosynthesis</keyword>
<keyword id="KW-0100">Branched-chain amino acid biosynthesis</keyword>
<keyword id="KW-0460">Magnesium</keyword>
<keyword id="KW-0479">Metal-binding</keyword>
<keyword id="KW-0521">NADP</keyword>
<keyword id="KW-0560">Oxidoreductase</keyword>
<keyword id="KW-1185">Reference proteome</keyword>
<evidence type="ECO:0000255" key="1">
    <source>
        <dbReference type="HAMAP-Rule" id="MF_00435"/>
    </source>
</evidence>
<evidence type="ECO:0000255" key="2">
    <source>
        <dbReference type="PROSITE-ProRule" id="PRU01197"/>
    </source>
</evidence>
<evidence type="ECO:0000255" key="3">
    <source>
        <dbReference type="PROSITE-ProRule" id="PRU01198"/>
    </source>
</evidence>
<name>ILVC_CROS5</name>
<dbReference type="EC" id="1.1.1.86" evidence="1"/>
<dbReference type="EMBL" id="CP000806">
    <property type="protein sequence ID" value="ACB51470.1"/>
    <property type="molecule type" value="Genomic_DNA"/>
</dbReference>
<dbReference type="RefSeq" id="WP_009546873.1">
    <property type="nucleotide sequence ID" value="NC_010546.1"/>
</dbReference>
<dbReference type="SMR" id="B1WNP1"/>
<dbReference type="STRING" id="43989.cce_2120"/>
<dbReference type="KEGG" id="cyt:cce_2120"/>
<dbReference type="eggNOG" id="COG0059">
    <property type="taxonomic scope" value="Bacteria"/>
</dbReference>
<dbReference type="HOGENOM" id="CLU_033821_0_1_3"/>
<dbReference type="OrthoDB" id="9804088at2"/>
<dbReference type="UniPathway" id="UPA00047">
    <property type="reaction ID" value="UER00056"/>
</dbReference>
<dbReference type="UniPathway" id="UPA00049">
    <property type="reaction ID" value="UER00060"/>
</dbReference>
<dbReference type="Proteomes" id="UP000001203">
    <property type="component" value="Chromosome circular"/>
</dbReference>
<dbReference type="GO" id="GO:0005829">
    <property type="term" value="C:cytosol"/>
    <property type="evidence" value="ECO:0007669"/>
    <property type="project" value="TreeGrafter"/>
</dbReference>
<dbReference type="GO" id="GO:0004455">
    <property type="term" value="F:ketol-acid reductoisomerase activity"/>
    <property type="evidence" value="ECO:0007669"/>
    <property type="project" value="UniProtKB-UniRule"/>
</dbReference>
<dbReference type="GO" id="GO:0000287">
    <property type="term" value="F:magnesium ion binding"/>
    <property type="evidence" value="ECO:0007669"/>
    <property type="project" value="UniProtKB-UniRule"/>
</dbReference>
<dbReference type="GO" id="GO:0050661">
    <property type="term" value="F:NADP binding"/>
    <property type="evidence" value="ECO:0007669"/>
    <property type="project" value="InterPro"/>
</dbReference>
<dbReference type="GO" id="GO:0009097">
    <property type="term" value="P:isoleucine biosynthetic process"/>
    <property type="evidence" value="ECO:0007669"/>
    <property type="project" value="UniProtKB-UniRule"/>
</dbReference>
<dbReference type="GO" id="GO:0009099">
    <property type="term" value="P:L-valine biosynthetic process"/>
    <property type="evidence" value="ECO:0007669"/>
    <property type="project" value="UniProtKB-UniRule"/>
</dbReference>
<dbReference type="FunFam" id="3.40.50.720:FF:000023">
    <property type="entry name" value="Ketol-acid reductoisomerase (NADP(+))"/>
    <property type="match status" value="1"/>
</dbReference>
<dbReference type="Gene3D" id="6.10.240.10">
    <property type="match status" value="1"/>
</dbReference>
<dbReference type="Gene3D" id="3.40.50.720">
    <property type="entry name" value="NAD(P)-binding Rossmann-like Domain"/>
    <property type="match status" value="1"/>
</dbReference>
<dbReference type="HAMAP" id="MF_00435">
    <property type="entry name" value="IlvC"/>
    <property type="match status" value="1"/>
</dbReference>
<dbReference type="InterPro" id="IPR008927">
    <property type="entry name" value="6-PGluconate_DH-like_C_sf"/>
</dbReference>
<dbReference type="InterPro" id="IPR013023">
    <property type="entry name" value="KARI"/>
</dbReference>
<dbReference type="InterPro" id="IPR000506">
    <property type="entry name" value="KARI_C"/>
</dbReference>
<dbReference type="InterPro" id="IPR013116">
    <property type="entry name" value="KARI_N"/>
</dbReference>
<dbReference type="InterPro" id="IPR014359">
    <property type="entry name" value="KARI_prok"/>
</dbReference>
<dbReference type="InterPro" id="IPR036291">
    <property type="entry name" value="NAD(P)-bd_dom_sf"/>
</dbReference>
<dbReference type="NCBIfam" id="TIGR00465">
    <property type="entry name" value="ilvC"/>
    <property type="match status" value="1"/>
</dbReference>
<dbReference type="NCBIfam" id="NF004017">
    <property type="entry name" value="PRK05479.1"/>
    <property type="match status" value="1"/>
</dbReference>
<dbReference type="NCBIfam" id="NF009940">
    <property type="entry name" value="PRK13403.1"/>
    <property type="match status" value="1"/>
</dbReference>
<dbReference type="PANTHER" id="PTHR21371">
    <property type="entry name" value="KETOL-ACID REDUCTOISOMERASE, MITOCHONDRIAL"/>
    <property type="match status" value="1"/>
</dbReference>
<dbReference type="PANTHER" id="PTHR21371:SF1">
    <property type="entry name" value="KETOL-ACID REDUCTOISOMERASE, MITOCHONDRIAL"/>
    <property type="match status" value="1"/>
</dbReference>
<dbReference type="Pfam" id="PF01450">
    <property type="entry name" value="KARI_C"/>
    <property type="match status" value="1"/>
</dbReference>
<dbReference type="Pfam" id="PF07991">
    <property type="entry name" value="KARI_N"/>
    <property type="match status" value="1"/>
</dbReference>
<dbReference type="PIRSF" id="PIRSF000116">
    <property type="entry name" value="IlvC_gammaproteo"/>
    <property type="match status" value="1"/>
</dbReference>
<dbReference type="SUPFAM" id="SSF48179">
    <property type="entry name" value="6-phosphogluconate dehydrogenase C-terminal domain-like"/>
    <property type="match status" value="1"/>
</dbReference>
<dbReference type="SUPFAM" id="SSF51735">
    <property type="entry name" value="NAD(P)-binding Rossmann-fold domains"/>
    <property type="match status" value="1"/>
</dbReference>
<dbReference type="PROSITE" id="PS51851">
    <property type="entry name" value="KARI_C"/>
    <property type="match status" value="1"/>
</dbReference>
<dbReference type="PROSITE" id="PS51850">
    <property type="entry name" value="KARI_N"/>
    <property type="match status" value="1"/>
</dbReference>
<accession>B1WNP1</accession>
<reference key="1">
    <citation type="journal article" date="2008" name="Proc. Natl. Acad. Sci. U.S.A.">
        <title>The genome of Cyanothece 51142, a unicellular diazotrophic cyanobacterium important in the marine nitrogen cycle.</title>
        <authorList>
            <person name="Welsh E.A."/>
            <person name="Liberton M."/>
            <person name="Stoeckel J."/>
            <person name="Loh T."/>
            <person name="Elvitigala T."/>
            <person name="Wang C."/>
            <person name="Wollam A."/>
            <person name="Fulton R.S."/>
            <person name="Clifton S.W."/>
            <person name="Jacobs J.M."/>
            <person name="Aurora R."/>
            <person name="Ghosh B.K."/>
            <person name="Sherman L.A."/>
            <person name="Smith R.D."/>
            <person name="Wilson R.K."/>
            <person name="Pakrasi H.B."/>
        </authorList>
    </citation>
    <scope>NUCLEOTIDE SEQUENCE [LARGE SCALE GENOMIC DNA]</scope>
    <source>
        <strain>ATCC 51142 / BH68</strain>
    </source>
</reference>